<evidence type="ECO:0000255" key="1">
    <source>
        <dbReference type="HAMAP-Rule" id="MF_00735"/>
    </source>
</evidence>
<comment type="function">
    <text evidence="1">Methylates ribosomal protein L11.</text>
</comment>
<comment type="catalytic activity">
    <reaction evidence="1">
        <text>L-lysyl-[protein] + 3 S-adenosyl-L-methionine = N(6),N(6),N(6)-trimethyl-L-lysyl-[protein] + 3 S-adenosyl-L-homocysteine + 3 H(+)</text>
        <dbReference type="Rhea" id="RHEA:54192"/>
        <dbReference type="Rhea" id="RHEA-COMP:9752"/>
        <dbReference type="Rhea" id="RHEA-COMP:13826"/>
        <dbReference type="ChEBI" id="CHEBI:15378"/>
        <dbReference type="ChEBI" id="CHEBI:29969"/>
        <dbReference type="ChEBI" id="CHEBI:57856"/>
        <dbReference type="ChEBI" id="CHEBI:59789"/>
        <dbReference type="ChEBI" id="CHEBI:61961"/>
    </reaction>
</comment>
<comment type="subcellular location">
    <subcellularLocation>
        <location evidence="1">Cytoplasm</location>
    </subcellularLocation>
</comment>
<comment type="similarity">
    <text evidence="1">Belongs to the methyltransferase superfamily. PrmA family.</text>
</comment>
<dbReference type="EC" id="2.1.1.-" evidence="1"/>
<dbReference type="EMBL" id="CP000853">
    <property type="protein sequence ID" value="ABW18781.1"/>
    <property type="molecule type" value="Genomic_DNA"/>
</dbReference>
<dbReference type="RefSeq" id="WP_012159093.1">
    <property type="nucleotide sequence ID" value="NC_009922.1"/>
</dbReference>
<dbReference type="SMR" id="A8MG53"/>
<dbReference type="STRING" id="350688.Clos_1235"/>
<dbReference type="KEGG" id="aoe:Clos_1235"/>
<dbReference type="eggNOG" id="COG2264">
    <property type="taxonomic scope" value="Bacteria"/>
</dbReference>
<dbReference type="HOGENOM" id="CLU_049382_0_1_9"/>
<dbReference type="OrthoDB" id="9785995at2"/>
<dbReference type="Proteomes" id="UP000000269">
    <property type="component" value="Chromosome"/>
</dbReference>
<dbReference type="GO" id="GO:0005737">
    <property type="term" value="C:cytoplasm"/>
    <property type="evidence" value="ECO:0007669"/>
    <property type="project" value="UniProtKB-SubCell"/>
</dbReference>
<dbReference type="GO" id="GO:0016279">
    <property type="term" value="F:protein-lysine N-methyltransferase activity"/>
    <property type="evidence" value="ECO:0007669"/>
    <property type="project" value="RHEA"/>
</dbReference>
<dbReference type="GO" id="GO:0032259">
    <property type="term" value="P:methylation"/>
    <property type="evidence" value="ECO:0007669"/>
    <property type="project" value="UniProtKB-KW"/>
</dbReference>
<dbReference type="CDD" id="cd02440">
    <property type="entry name" value="AdoMet_MTases"/>
    <property type="match status" value="1"/>
</dbReference>
<dbReference type="Gene3D" id="3.40.50.150">
    <property type="entry name" value="Vaccinia Virus protein VP39"/>
    <property type="match status" value="1"/>
</dbReference>
<dbReference type="HAMAP" id="MF_00735">
    <property type="entry name" value="Methyltr_PrmA"/>
    <property type="match status" value="1"/>
</dbReference>
<dbReference type="InterPro" id="IPR050078">
    <property type="entry name" value="Ribosomal_L11_MeTrfase_PrmA"/>
</dbReference>
<dbReference type="InterPro" id="IPR004498">
    <property type="entry name" value="Ribosomal_PrmA_MeTrfase"/>
</dbReference>
<dbReference type="InterPro" id="IPR029063">
    <property type="entry name" value="SAM-dependent_MTases_sf"/>
</dbReference>
<dbReference type="NCBIfam" id="TIGR00406">
    <property type="entry name" value="prmA"/>
    <property type="match status" value="1"/>
</dbReference>
<dbReference type="PANTHER" id="PTHR43648">
    <property type="entry name" value="ELECTRON TRANSFER FLAVOPROTEIN BETA SUBUNIT LYSINE METHYLTRANSFERASE"/>
    <property type="match status" value="1"/>
</dbReference>
<dbReference type="PANTHER" id="PTHR43648:SF1">
    <property type="entry name" value="ELECTRON TRANSFER FLAVOPROTEIN BETA SUBUNIT LYSINE METHYLTRANSFERASE"/>
    <property type="match status" value="1"/>
</dbReference>
<dbReference type="Pfam" id="PF06325">
    <property type="entry name" value="PrmA"/>
    <property type="match status" value="1"/>
</dbReference>
<dbReference type="PIRSF" id="PIRSF000401">
    <property type="entry name" value="RPL11_MTase"/>
    <property type="match status" value="1"/>
</dbReference>
<dbReference type="SUPFAM" id="SSF53335">
    <property type="entry name" value="S-adenosyl-L-methionine-dependent methyltransferases"/>
    <property type="match status" value="1"/>
</dbReference>
<proteinExistence type="inferred from homology"/>
<accession>A8MG53</accession>
<feature type="chain" id="PRO_1000062117" description="Ribosomal protein L11 methyltransferase">
    <location>
        <begin position="1"/>
        <end position="313"/>
    </location>
</feature>
<feature type="binding site" evidence="1">
    <location>
        <position position="161"/>
    </location>
    <ligand>
        <name>S-adenosyl-L-methionine</name>
        <dbReference type="ChEBI" id="CHEBI:59789"/>
    </ligand>
</feature>
<feature type="binding site" evidence="1">
    <location>
        <position position="182"/>
    </location>
    <ligand>
        <name>S-adenosyl-L-methionine</name>
        <dbReference type="ChEBI" id="CHEBI:59789"/>
    </ligand>
</feature>
<feature type="binding site" evidence="1">
    <location>
        <position position="204"/>
    </location>
    <ligand>
        <name>S-adenosyl-L-methionine</name>
        <dbReference type="ChEBI" id="CHEBI:59789"/>
    </ligand>
</feature>
<feature type="binding site" evidence="1">
    <location>
        <position position="247"/>
    </location>
    <ligand>
        <name>S-adenosyl-L-methionine</name>
        <dbReference type="ChEBI" id="CHEBI:59789"/>
    </ligand>
</feature>
<organism>
    <name type="scientific">Alkaliphilus oremlandii (strain OhILAs)</name>
    <name type="common">Clostridium oremlandii (strain OhILAs)</name>
    <dbReference type="NCBI Taxonomy" id="350688"/>
    <lineage>
        <taxon>Bacteria</taxon>
        <taxon>Bacillati</taxon>
        <taxon>Bacillota</taxon>
        <taxon>Clostridia</taxon>
        <taxon>Peptostreptococcales</taxon>
        <taxon>Natronincolaceae</taxon>
        <taxon>Alkaliphilus</taxon>
    </lineage>
</organism>
<gene>
    <name evidence="1" type="primary">prmA</name>
    <name type="ordered locus">Clos_1235</name>
</gene>
<protein>
    <recommendedName>
        <fullName evidence="1">Ribosomal protein L11 methyltransferase</fullName>
        <shortName evidence="1">L11 Mtase</shortName>
        <ecNumber evidence="1">2.1.1.-</ecNumber>
    </recommendedName>
</protein>
<reference key="1">
    <citation type="submission" date="2007-10" db="EMBL/GenBank/DDBJ databases">
        <title>Complete genome of Alkaliphilus oremlandii OhILAs.</title>
        <authorList>
            <person name="Copeland A."/>
            <person name="Lucas S."/>
            <person name="Lapidus A."/>
            <person name="Barry K."/>
            <person name="Detter J.C."/>
            <person name="Glavina del Rio T."/>
            <person name="Hammon N."/>
            <person name="Israni S."/>
            <person name="Dalin E."/>
            <person name="Tice H."/>
            <person name="Pitluck S."/>
            <person name="Chain P."/>
            <person name="Malfatti S."/>
            <person name="Shin M."/>
            <person name="Vergez L."/>
            <person name="Schmutz J."/>
            <person name="Larimer F."/>
            <person name="Land M."/>
            <person name="Hauser L."/>
            <person name="Kyrpides N."/>
            <person name="Mikhailova N."/>
            <person name="Stolz J.F."/>
            <person name="Dawson A."/>
            <person name="Fisher E."/>
            <person name="Crable B."/>
            <person name="Perera E."/>
            <person name="Lisak J."/>
            <person name="Ranganathan M."/>
            <person name="Basu P."/>
            <person name="Richardson P."/>
        </authorList>
    </citation>
    <scope>NUCLEOTIDE SEQUENCE [LARGE SCALE GENOMIC DNA]</scope>
    <source>
        <strain>OhILAs</strain>
    </source>
</reference>
<name>PRMA_ALKOO</name>
<keyword id="KW-0963">Cytoplasm</keyword>
<keyword id="KW-0489">Methyltransferase</keyword>
<keyword id="KW-1185">Reference proteome</keyword>
<keyword id="KW-0949">S-adenosyl-L-methionine</keyword>
<keyword id="KW-0808">Transferase</keyword>
<sequence>MKWIEVTIRTTTEAVEAVANVLYDAGVSGVAIEDPNDIVFVNNDEKTWDYVDEALIDFEQGALVKGYLPESSDLVEKIEIIKNSIAALPEFGLNIGAGEVSTLEVNEEDWSTSWKQYYKPTKIGNKIVIKPTWEEYIAQEGDMVIEMDPGMAFGTGTHETTMMCVEQLEKYISKDTTVFDIGTGSGILAIVGAKLGAKKAIGVDFDPVAVTVANENVRANKVENIVEIKQGNLMDVVSEKADVVVANIIAEVIVILSEDIKSFLNKNGIFISSGIILDKIDTVKESLVKNGLEVIHVETMGEWAAIVSKVKGA</sequence>